<comment type="function">
    <text evidence="1">Succinyl-CoA synthetase functions in the citric acid cycle (TCA), coupling the hydrolysis of succinyl-CoA to the synthesis of either ATP or GTP and thus represents the only step of substrate-level phosphorylation in the TCA. The beta subunit provides nucleotide specificity of the enzyme and binds the substrate succinate, while the binding sites for coenzyme A and phosphate are found in the alpha subunit.</text>
</comment>
<comment type="catalytic activity">
    <reaction evidence="1">
        <text>succinate + ATP + CoA = succinyl-CoA + ADP + phosphate</text>
        <dbReference type="Rhea" id="RHEA:17661"/>
        <dbReference type="ChEBI" id="CHEBI:30031"/>
        <dbReference type="ChEBI" id="CHEBI:30616"/>
        <dbReference type="ChEBI" id="CHEBI:43474"/>
        <dbReference type="ChEBI" id="CHEBI:57287"/>
        <dbReference type="ChEBI" id="CHEBI:57292"/>
        <dbReference type="ChEBI" id="CHEBI:456216"/>
        <dbReference type="EC" id="6.2.1.5"/>
    </reaction>
    <physiologicalReaction direction="right-to-left" evidence="1">
        <dbReference type="Rhea" id="RHEA:17663"/>
    </physiologicalReaction>
</comment>
<comment type="catalytic activity">
    <reaction evidence="1">
        <text>GTP + succinate + CoA = succinyl-CoA + GDP + phosphate</text>
        <dbReference type="Rhea" id="RHEA:22120"/>
        <dbReference type="ChEBI" id="CHEBI:30031"/>
        <dbReference type="ChEBI" id="CHEBI:37565"/>
        <dbReference type="ChEBI" id="CHEBI:43474"/>
        <dbReference type="ChEBI" id="CHEBI:57287"/>
        <dbReference type="ChEBI" id="CHEBI:57292"/>
        <dbReference type="ChEBI" id="CHEBI:58189"/>
    </reaction>
    <physiologicalReaction direction="right-to-left" evidence="1">
        <dbReference type="Rhea" id="RHEA:22122"/>
    </physiologicalReaction>
</comment>
<comment type="cofactor">
    <cofactor evidence="1">
        <name>Mg(2+)</name>
        <dbReference type="ChEBI" id="CHEBI:18420"/>
    </cofactor>
    <text evidence="1">Binds 1 Mg(2+) ion per subunit.</text>
</comment>
<comment type="pathway">
    <text evidence="1">Carbohydrate metabolism; tricarboxylic acid cycle; succinate from succinyl-CoA (ligase route): step 1/1.</text>
</comment>
<comment type="subunit">
    <text evidence="1">Heterotetramer of two alpha and two beta subunits.</text>
</comment>
<comment type="similarity">
    <text evidence="1">Belongs to the succinate/malate CoA ligase beta subunit family.</text>
</comment>
<gene>
    <name evidence="1" type="primary">sucC</name>
    <name type="ordered locus">RP433</name>
</gene>
<proteinExistence type="inferred from homology"/>
<keyword id="KW-0067">ATP-binding</keyword>
<keyword id="KW-0436">Ligase</keyword>
<keyword id="KW-0460">Magnesium</keyword>
<keyword id="KW-0479">Metal-binding</keyword>
<keyword id="KW-0547">Nucleotide-binding</keyword>
<keyword id="KW-1185">Reference proteome</keyword>
<keyword id="KW-0816">Tricarboxylic acid cycle</keyword>
<evidence type="ECO:0000255" key="1">
    <source>
        <dbReference type="HAMAP-Rule" id="MF_00558"/>
    </source>
</evidence>
<feature type="chain" id="PRO_0000102851" description="Succinate--CoA ligase [ADP-forming] subunit beta">
    <location>
        <begin position="1"/>
        <end position="386"/>
    </location>
</feature>
<feature type="domain" description="ATP-grasp" evidence="1">
    <location>
        <begin position="9"/>
        <end position="244"/>
    </location>
</feature>
<feature type="binding site" evidence="1">
    <location>
        <position position="46"/>
    </location>
    <ligand>
        <name>ATP</name>
        <dbReference type="ChEBI" id="CHEBI:30616"/>
    </ligand>
</feature>
<feature type="binding site" evidence="1">
    <location>
        <begin position="53"/>
        <end position="55"/>
    </location>
    <ligand>
        <name>ATP</name>
        <dbReference type="ChEBI" id="CHEBI:30616"/>
    </ligand>
</feature>
<feature type="binding site" evidence="1">
    <location>
        <position position="99"/>
    </location>
    <ligand>
        <name>ATP</name>
        <dbReference type="ChEBI" id="CHEBI:30616"/>
    </ligand>
</feature>
<feature type="binding site" evidence="1">
    <location>
        <position position="102"/>
    </location>
    <ligand>
        <name>ATP</name>
        <dbReference type="ChEBI" id="CHEBI:30616"/>
    </ligand>
</feature>
<feature type="binding site" evidence="1">
    <location>
        <position position="107"/>
    </location>
    <ligand>
        <name>ATP</name>
        <dbReference type="ChEBI" id="CHEBI:30616"/>
    </ligand>
</feature>
<feature type="binding site" evidence="1">
    <location>
        <position position="199"/>
    </location>
    <ligand>
        <name>Mg(2+)</name>
        <dbReference type="ChEBI" id="CHEBI:18420"/>
    </ligand>
</feature>
<feature type="binding site" evidence="1">
    <location>
        <position position="213"/>
    </location>
    <ligand>
        <name>Mg(2+)</name>
        <dbReference type="ChEBI" id="CHEBI:18420"/>
    </ligand>
</feature>
<feature type="binding site" evidence="1">
    <location>
        <position position="264"/>
    </location>
    <ligand>
        <name>substrate</name>
        <note>ligand shared with subunit alpha</note>
    </ligand>
</feature>
<feature type="binding site" evidence="1">
    <location>
        <begin position="321"/>
        <end position="323"/>
    </location>
    <ligand>
        <name>substrate</name>
        <note>ligand shared with subunit alpha</note>
    </ligand>
</feature>
<accession>O05966</accession>
<reference key="1">
    <citation type="journal article" date="1997" name="Microbiology">
        <title>Genomic rearrangements during evolution of the obligate intracellular parasite Rickettsia prowazekii as inferred from an analysis of 52015 bp nucleotide sequence.</title>
        <authorList>
            <person name="Andersson J.O."/>
            <person name="Andersson S.G.E."/>
        </authorList>
    </citation>
    <scope>NUCLEOTIDE SEQUENCE [GENOMIC DNA]</scope>
    <source>
        <strain>Madrid E</strain>
    </source>
</reference>
<reference key="2">
    <citation type="journal article" date="1998" name="Nature">
        <title>The genome sequence of Rickettsia prowazekii and the origin of mitochondria.</title>
        <authorList>
            <person name="Andersson S.G.E."/>
            <person name="Zomorodipour A."/>
            <person name="Andersson J.O."/>
            <person name="Sicheritz-Ponten T."/>
            <person name="Alsmark U.C.M."/>
            <person name="Podowski R.M."/>
            <person name="Naeslund A.K."/>
            <person name="Eriksson A.-S."/>
            <person name="Winkler H.H."/>
            <person name="Kurland C.G."/>
        </authorList>
    </citation>
    <scope>NUCLEOTIDE SEQUENCE [LARGE SCALE GENOMIC DNA]</scope>
    <source>
        <strain>Madrid E</strain>
    </source>
</reference>
<sequence length="386" mass="41978">MNIHEYQAKEILRKYGVPTSTGLVVTKTEKINETIDKLNTKVYVIKAQIHAGGRGKAGGVKVAKSKEEAKKVAHDMFGINLVTHQTGPQGQKVNRIYIESGCDILKEYYFSIVFDRSASCITFIASTEGGVDIEAVAEKMPEKIIKFAVDPATGLQDFHMRGIAYELGFKDNQAKQMKEIVKAVYNAFIETDATQIEINPLIINSYGNLLALDAKITFDDNGLFKHPNITAMRDHDEEDPLETRAANAGLSYVKMDGNIGCMVNGAGLAMATMDIIKLYGALPANFLDVGGGADRERVKEALKIILSDKEVKGILVNIFGGIMRCDIIAEGIIAAAKDIGIKVPLVVRLAGTNVEKGKEILSNSDLKIIPAHDLADAANKIVEAIR</sequence>
<organism>
    <name type="scientific">Rickettsia prowazekii (strain Madrid E)</name>
    <dbReference type="NCBI Taxonomy" id="272947"/>
    <lineage>
        <taxon>Bacteria</taxon>
        <taxon>Pseudomonadati</taxon>
        <taxon>Pseudomonadota</taxon>
        <taxon>Alphaproteobacteria</taxon>
        <taxon>Rickettsiales</taxon>
        <taxon>Rickettsiaceae</taxon>
        <taxon>Rickettsieae</taxon>
        <taxon>Rickettsia</taxon>
        <taxon>typhus group</taxon>
    </lineage>
</organism>
<name>SUCC_RICPR</name>
<dbReference type="EC" id="6.2.1.5" evidence="1"/>
<dbReference type="EMBL" id="Y11777">
    <property type="protein sequence ID" value="CAA72445.1"/>
    <property type="molecule type" value="Genomic_DNA"/>
</dbReference>
<dbReference type="EMBL" id="AJ235271">
    <property type="protein sequence ID" value="CAA14890.1"/>
    <property type="molecule type" value="Genomic_DNA"/>
</dbReference>
<dbReference type="PIR" id="H71701">
    <property type="entry name" value="H71701"/>
</dbReference>
<dbReference type="RefSeq" id="NP_220814.1">
    <property type="nucleotide sequence ID" value="NC_000963.1"/>
</dbReference>
<dbReference type="RefSeq" id="WP_010886294.1">
    <property type="nucleotide sequence ID" value="NC_000963.1"/>
</dbReference>
<dbReference type="SMR" id="O05966"/>
<dbReference type="STRING" id="272947.gene:17555513"/>
<dbReference type="EnsemblBacteria" id="CAA14890">
    <property type="protein sequence ID" value="CAA14890"/>
    <property type="gene ID" value="CAA14890"/>
</dbReference>
<dbReference type="KEGG" id="rpr:RP433"/>
<dbReference type="PATRIC" id="fig|272947.5.peg.446"/>
<dbReference type="eggNOG" id="COG0045">
    <property type="taxonomic scope" value="Bacteria"/>
</dbReference>
<dbReference type="HOGENOM" id="CLU_037430_0_2_5"/>
<dbReference type="OrthoDB" id="9802602at2"/>
<dbReference type="UniPathway" id="UPA00223">
    <property type="reaction ID" value="UER00999"/>
</dbReference>
<dbReference type="Proteomes" id="UP000002480">
    <property type="component" value="Chromosome"/>
</dbReference>
<dbReference type="GO" id="GO:0005829">
    <property type="term" value="C:cytosol"/>
    <property type="evidence" value="ECO:0007669"/>
    <property type="project" value="TreeGrafter"/>
</dbReference>
<dbReference type="GO" id="GO:0042709">
    <property type="term" value="C:succinate-CoA ligase complex"/>
    <property type="evidence" value="ECO:0007669"/>
    <property type="project" value="TreeGrafter"/>
</dbReference>
<dbReference type="GO" id="GO:0005524">
    <property type="term" value="F:ATP binding"/>
    <property type="evidence" value="ECO:0007669"/>
    <property type="project" value="UniProtKB-UniRule"/>
</dbReference>
<dbReference type="GO" id="GO:0000287">
    <property type="term" value="F:magnesium ion binding"/>
    <property type="evidence" value="ECO:0007669"/>
    <property type="project" value="UniProtKB-UniRule"/>
</dbReference>
<dbReference type="GO" id="GO:0004775">
    <property type="term" value="F:succinate-CoA ligase (ADP-forming) activity"/>
    <property type="evidence" value="ECO:0007669"/>
    <property type="project" value="UniProtKB-UniRule"/>
</dbReference>
<dbReference type="GO" id="GO:0004776">
    <property type="term" value="F:succinate-CoA ligase (GDP-forming) activity"/>
    <property type="evidence" value="ECO:0007669"/>
    <property type="project" value="RHEA"/>
</dbReference>
<dbReference type="GO" id="GO:0006104">
    <property type="term" value="P:succinyl-CoA metabolic process"/>
    <property type="evidence" value="ECO:0007669"/>
    <property type="project" value="TreeGrafter"/>
</dbReference>
<dbReference type="GO" id="GO:0006099">
    <property type="term" value="P:tricarboxylic acid cycle"/>
    <property type="evidence" value="ECO:0007669"/>
    <property type="project" value="UniProtKB-UniRule"/>
</dbReference>
<dbReference type="FunFam" id="3.30.1490.20:FF:000002">
    <property type="entry name" value="Succinate--CoA ligase [ADP-forming] subunit beta"/>
    <property type="match status" value="1"/>
</dbReference>
<dbReference type="FunFam" id="3.30.470.20:FF:000002">
    <property type="entry name" value="Succinate--CoA ligase [ADP-forming] subunit beta"/>
    <property type="match status" value="1"/>
</dbReference>
<dbReference type="FunFam" id="3.40.50.261:FF:000001">
    <property type="entry name" value="Succinate--CoA ligase [ADP-forming] subunit beta"/>
    <property type="match status" value="1"/>
</dbReference>
<dbReference type="Gene3D" id="3.30.1490.20">
    <property type="entry name" value="ATP-grasp fold, A domain"/>
    <property type="match status" value="1"/>
</dbReference>
<dbReference type="Gene3D" id="3.30.470.20">
    <property type="entry name" value="ATP-grasp fold, B domain"/>
    <property type="match status" value="1"/>
</dbReference>
<dbReference type="Gene3D" id="3.40.50.261">
    <property type="entry name" value="Succinyl-CoA synthetase domains"/>
    <property type="match status" value="1"/>
</dbReference>
<dbReference type="HAMAP" id="MF_00558">
    <property type="entry name" value="Succ_CoA_beta"/>
    <property type="match status" value="1"/>
</dbReference>
<dbReference type="InterPro" id="IPR011761">
    <property type="entry name" value="ATP-grasp"/>
</dbReference>
<dbReference type="InterPro" id="IPR013650">
    <property type="entry name" value="ATP-grasp_succ-CoA_synth-type"/>
</dbReference>
<dbReference type="InterPro" id="IPR013815">
    <property type="entry name" value="ATP_grasp_subdomain_1"/>
</dbReference>
<dbReference type="InterPro" id="IPR017866">
    <property type="entry name" value="Succ-CoA_synthase_bsu_CS"/>
</dbReference>
<dbReference type="InterPro" id="IPR005811">
    <property type="entry name" value="SUCC_ACL_C"/>
</dbReference>
<dbReference type="InterPro" id="IPR005809">
    <property type="entry name" value="Succ_CoA_ligase-like_bsu"/>
</dbReference>
<dbReference type="InterPro" id="IPR016102">
    <property type="entry name" value="Succinyl-CoA_synth-like"/>
</dbReference>
<dbReference type="NCBIfam" id="NF001913">
    <property type="entry name" value="PRK00696.1"/>
    <property type="match status" value="1"/>
</dbReference>
<dbReference type="NCBIfam" id="TIGR01016">
    <property type="entry name" value="sucCoAbeta"/>
    <property type="match status" value="1"/>
</dbReference>
<dbReference type="PANTHER" id="PTHR11815:SF10">
    <property type="entry name" value="SUCCINATE--COA LIGASE [GDP-FORMING] SUBUNIT BETA, MITOCHONDRIAL"/>
    <property type="match status" value="1"/>
</dbReference>
<dbReference type="PANTHER" id="PTHR11815">
    <property type="entry name" value="SUCCINYL-COA SYNTHETASE BETA CHAIN"/>
    <property type="match status" value="1"/>
</dbReference>
<dbReference type="Pfam" id="PF08442">
    <property type="entry name" value="ATP-grasp_2"/>
    <property type="match status" value="1"/>
</dbReference>
<dbReference type="Pfam" id="PF00549">
    <property type="entry name" value="Ligase_CoA"/>
    <property type="match status" value="1"/>
</dbReference>
<dbReference type="PIRSF" id="PIRSF001554">
    <property type="entry name" value="SucCS_beta"/>
    <property type="match status" value="1"/>
</dbReference>
<dbReference type="SUPFAM" id="SSF56059">
    <property type="entry name" value="Glutathione synthetase ATP-binding domain-like"/>
    <property type="match status" value="1"/>
</dbReference>
<dbReference type="SUPFAM" id="SSF52210">
    <property type="entry name" value="Succinyl-CoA synthetase domains"/>
    <property type="match status" value="1"/>
</dbReference>
<dbReference type="PROSITE" id="PS50975">
    <property type="entry name" value="ATP_GRASP"/>
    <property type="match status" value="1"/>
</dbReference>
<dbReference type="PROSITE" id="PS01217">
    <property type="entry name" value="SUCCINYL_COA_LIG_3"/>
    <property type="match status" value="1"/>
</dbReference>
<protein>
    <recommendedName>
        <fullName evidence="1">Succinate--CoA ligase [ADP-forming] subunit beta</fullName>
        <ecNumber evidence="1">6.2.1.5</ecNumber>
    </recommendedName>
    <alternativeName>
        <fullName evidence="1">Succinyl-CoA synthetase subunit beta</fullName>
        <shortName evidence="1">SCS-beta</shortName>
    </alternativeName>
</protein>